<feature type="chain" id="PRO_0000107720" description="Nucleotide-binding protein LJ_0866">
    <location>
        <begin position="1"/>
        <end position="291"/>
    </location>
</feature>
<feature type="binding site" evidence="1">
    <location>
        <begin position="13"/>
        <end position="20"/>
    </location>
    <ligand>
        <name>ATP</name>
        <dbReference type="ChEBI" id="CHEBI:30616"/>
    </ligand>
</feature>
<feature type="binding site" evidence="1">
    <location>
        <begin position="63"/>
        <end position="66"/>
    </location>
    <ligand>
        <name>GTP</name>
        <dbReference type="ChEBI" id="CHEBI:37565"/>
    </ligand>
</feature>
<proteinExistence type="inferred from homology"/>
<evidence type="ECO:0000255" key="1">
    <source>
        <dbReference type="HAMAP-Rule" id="MF_00636"/>
    </source>
</evidence>
<organism>
    <name type="scientific">Lactobacillus johnsonii (strain CNCM I-12250 / La1 / NCC 533)</name>
    <dbReference type="NCBI Taxonomy" id="257314"/>
    <lineage>
        <taxon>Bacteria</taxon>
        <taxon>Bacillati</taxon>
        <taxon>Bacillota</taxon>
        <taxon>Bacilli</taxon>
        <taxon>Lactobacillales</taxon>
        <taxon>Lactobacillaceae</taxon>
        <taxon>Lactobacillus</taxon>
    </lineage>
</organism>
<reference key="1">
    <citation type="journal article" date="2004" name="Proc. Natl. Acad. Sci. U.S.A.">
        <title>The genome sequence of the probiotic intestinal bacterium Lactobacillus johnsonii NCC 533.</title>
        <authorList>
            <person name="Pridmore R.D."/>
            <person name="Berger B."/>
            <person name="Desiere F."/>
            <person name="Vilanova D."/>
            <person name="Barretto C."/>
            <person name="Pittet A.-C."/>
            <person name="Zwahlen M.-C."/>
            <person name="Rouvet M."/>
            <person name="Altermann E."/>
            <person name="Barrangou R."/>
            <person name="Mollet B."/>
            <person name="Mercenier A."/>
            <person name="Klaenhammer T."/>
            <person name="Arigoni F."/>
            <person name="Schell M.A."/>
        </authorList>
    </citation>
    <scope>NUCLEOTIDE SEQUENCE [LARGE SCALE GENOMIC DNA]</scope>
    <source>
        <strain>CNCM I-1225 / La1 / NCC 533</strain>
    </source>
</reference>
<accession>Q74K87</accession>
<protein>
    <recommendedName>
        <fullName evidence="1">Nucleotide-binding protein LJ_0866</fullName>
    </recommendedName>
</protein>
<name>Y866_LACJO</name>
<sequence>MAEQKKQLLIVTGMSGAGKTVAIKALEDMGYFVVDNLPPELLGSFWELINNSSDFSKAAVVVDLRVKSFYKDLVDEIKSLEDSQNVQSTVLFLDASDDVLVSRYKETRRLPPLAHTGRLLDGIQEERNILSRTKNISNIIIDTSHLSTKELKTKLVDKFGDNRTRTFSIEVMSFGFKYGIPIDADIVMDVRFLPNPFYIPQLKPFTGLDRRVFDYVMSKKETKEFYAKFLDMLETAIPGYIAEGKEKLTIAIGCTGGQHRSVSIARQLAVDLAKKYPVDISHREISRYIGQ</sequence>
<dbReference type="EMBL" id="AE017198">
    <property type="protein sequence ID" value="AAS08687.1"/>
    <property type="molecule type" value="Genomic_DNA"/>
</dbReference>
<dbReference type="SMR" id="Q74K87"/>
<dbReference type="KEGG" id="ljo:LJ_0866"/>
<dbReference type="eggNOG" id="COG1660">
    <property type="taxonomic scope" value="Bacteria"/>
</dbReference>
<dbReference type="HOGENOM" id="CLU_059558_0_0_9"/>
<dbReference type="Proteomes" id="UP000000581">
    <property type="component" value="Chromosome"/>
</dbReference>
<dbReference type="GO" id="GO:0005524">
    <property type="term" value="F:ATP binding"/>
    <property type="evidence" value="ECO:0007669"/>
    <property type="project" value="UniProtKB-UniRule"/>
</dbReference>
<dbReference type="GO" id="GO:0005525">
    <property type="term" value="F:GTP binding"/>
    <property type="evidence" value="ECO:0007669"/>
    <property type="project" value="UniProtKB-UniRule"/>
</dbReference>
<dbReference type="Gene3D" id="3.40.50.300">
    <property type="entry name" value="P-loop containing nucleotide triphosphate hydrolases"/>
    <property type="match status" value="1"/>
</dbReference>
<dbReference type="HAMAP" id="MF_00636">
    <property type="entry name" value="RapZ_like"/>
    <property type="match status" value="1"/>
</dbReference>
<dbReference type="InterPro" id="IPR027417">
    <property type="entry name" value="P-loop_NTPase"/>
</dbReference>
<dbReference type="InterPro" id="IPR005337">
    <property type="entry name" value="RapZ-like"/>
</dbReference>
<dbReference type="InterPro" id="IPR053930">
    <property type="entry name" value="RapZ-like_N"/>
</dbReference>
<dbReference type="InterPro" id="IPR053931">
    <property type="entry name" value="RapZ_C"/>
</dbReference>
<dbReference type="NCBIfam" id="NF003828">
    <property type="entry name" value="PRK05416.1"/>
    <property type="match status" value="1"/>
</dbReference>
<dbReference type="PANTHER" id="PTHR30448">
    <property type="entry name" value="RNASE ADAPTER PROTEIN RAPZ"/>
    <property type="match status" value="1"/>
</dbReference>
<dbReference type="PANTHER" id="PTHR30448:SF0">
    <property type="entry name" value="RNASE ADAPTER PROTEIN RAPZ"/>
    <property type="match status" value="1"/>
</dbReference>
<dbReference type="Pfam" id="PF22740">
    <property type="entry name" value="PapZ_C"/>
    <property type="match status" value="1"/>
</dbReference>
<dbReference type="Pfam" id="PF03668">
    <property type="entry name" value="RapZ-like_N"/>
    <property type="match status" value="1"/>
</dbReference>
<dbReference type="PIRSF" id="PIRSF005052">
    <property type="entry name" value="P-loopkin"/>
    <property type="match status" value="1"/>
</dbReference>
<dbReference type="SUPFAM" id="SSF52540">
    <property type="entry name" value="P-loop containing nucleoside triphosphate hydrolases"/>
    <property type="match status" value="1"/>
</dbReference>
<keyword id="KW-0067">ATP-binding</keyword>
<keyword id="KW-0342">GTP-binding</keyword>
<keyword id="KW-0547">Nucleotide-binding</keyword>
<gene>
    <name type="ordered locus">LJ_0866</name>
</gene>
<comment type="function">
    <text evidence="1">Displays ATPase and GTPase activities.</text>
</comment>
<comment type="similarity">
    <text evidence="1">Belongs to the RapZ-like family.</text>
</comment>